<feature type="signal peptide" evidence="1">
    <location>
        <begin position="1"/>
        <end position="25"/>
    </location>
</feature>
<feature type="chain" id="PRO_0000253320" description="Wall-associated receptor kinase-like 15">
    <location>
        <begin position="26"/>
        <end position="639"/>
    </location>
</feature>
<feature type="topological domain" description="Extracellular" evidence="1">
    <location>
        <begin position="26"/>
        <end position="282"/>
    </location>
</feature>
<feature type="transmembrane region" description="Helical" evidence="1">
    <location>
        <begin position="283"/>
        <end position="303"/>
    </location>
</feature>
<feature type="topological domain" description="Cytoplasmic" evidence="1">
    <location>
        <begin position="304"/>
        <end position="639"/>
    </location>
</feature>
<feature type="domain" description="Protein kinase" evidence="2">
    <location>
        <begin position="354"/>
        <end position="639"/>
    </location>
</feature>
<feature type="active site" description="Proton acceptor" evidence="2 3">
    <location>
        <position position="484"/>
    </location>
</feature>
<feature type="binding site" evidence="2">
    <location>
        <begin position="360"/>
        <end position="368"/>
    </location>
    <ligand>
        <name>ATP</name>
        <dbReference type="ChEBI" id="CHEBI:30616"/>
    </ligand>
</feature>
<feature type="binding site" evidence="2">
    <location>
        <position position="382"/>
    </location>
    <ligand>
        <name>ATP</name>
        <dbReference type="ChEBI" id="CHEBI:30616"/>
    </ligand>
</feature>
<feature type="glycosylation site" description="N-linked (GlcNAc...) asparagine" evidence="1">
    <location>
        <position position="68"/>
    </location>
</feature>
<feature type="glycosylation site" description="N-linked (GlcNAc...) asparagine" evidence="1">
    <location>
        <position position="115"/>
    </location>
</feature>
<feature type="glycosylation site" description="N-linked (GlcNAc...) asparagine" evidence="1">
    <location>
        <position position="126"/>
    </location>
</feature>
<feature type="glycosylation site" description="N-linked (GlcNAc...) asparagine" evidence="1">
    <location>
        <position position="141"/>
    </location>
</feature>
<feature type="glycosylation site" description="N-linked (GlcNAc...) asparagine" evidence="1">
    <location>
        <position position="241"/>
    </location>
</feature>
<proteinExistence type="evidence at transcript level"/>
<comment type="function">
    <text>Putative serine/threonine-protein kinase that may function as a signaling receptor of extracellular matrix component.</text>
</comment>
<comment type="catalytic activity">
    <reaction>
        <text>L-seryl-[protein] + ATP = O-phospho-L-seryl-[protein] + ADP + H(+)</text>
        <dbReference type="Rhea" id="RHEA:17989"/>
        <dbReference type="Rhea" id="RHEA-COMP:9863"/>
        <dbReference type="Rhea" id="RHEA-COMP:11604"/>
        <dbReference type="ChEBI" id="CHEBI:15378"/>
        <dbReference type="ChEBI" id="CHEBI:29999"/>
        <dbReference type="ChEBI" id="CHEBI:30616"/>
        <dbReference type="ChEBI" id="CHEBI:83421"/>
        <dbReference type="ChEBI" id="CHEBI:456216"/>
    </reaction>
</comment>
<comment type="catalytic activity">
    <reaction>
        <text>L-threonyl-[protein] + ATP = O-phospho-L-threonyl-[protein] + ADP + H(+)</text>
        <dbReference type="Rhea" id="RHEA:46608"/>
        <dbReference type="Rhea" id="RHEA-COMP:11060"/>
        <dbReference type="Rhea" id="RHEA-COMP:11605"/>
        <dbReference type="ChEBI" id="CHEBI:15378"/>
        <dbReference type="ChEBI" id="CHEBI:30013"/>
        <dbReference type="ChEBI" id="CHEBI:30616"/>
        <dbReference type="ChEBI" id="CHEBI:61977"/>
        <dbReference type="ChEBI" id="CHEBI:456216"/>
    </reaction>
</comment>
<comment type="subcellular location">
    <subcellularLocation>
        <location evidence="4">Membrane</location>
        <topology evidence="4">Single-pass type I membrane protein</topology>
    </subcellularLocation>
</comment>
<comment type="similarity">
    <text evidence="2">Belongs to the protein kinase superfamily. Ser/Thr protein kinase family.</text>
</comment>
<comment type="caution">
    <text evidence="4">Lacks the calcium-binding EGF-like domain which is a conserved feature of the wall-associated receptor kinase family.</text>
</comment>
<comment type="sequence caution" evidence="4">
    <conflict type="miscellaneous discrepancy">
        <sequence resource="EMBL" id="BX822802"/>
    </conflict>
    <text>Sequencing errors.</text>
</comment>
<keyword id="KW-0067">ATP-binding</keyword>
<keyword id="KW-0325">Glycoprotein</keyword>
<keyword id="KW-0418">Kinase</keyword>
<keyword id="KW-0472">Membrane</keyword>
<keyword id="KW-0547">Nucleotide-binding</keyword>
<keyword id="KW-1185">Reference proteome</keyword>
<keyword id="KW-0723">Serine/threonine-protein kinase</keyword>
<keyword id="KW-0732">Signal</keyword>
<keyword id="KW-0808">Transferase</keyword>
<keyword id="KW-0812">Transmembrane</keyword>
<keyword id="KW-1133">Transmembrane helix</keyword>
<organism>
    <name type="scientific">Arabidopsis thaliana</name>
    <name type="common">Mouse-ear cress</name>
    <dbReference type="NCBI Taxonomy" id="3702"/>
    <lineage>
        <taxon>Eukaryota</taxon>
        <taxon>Viridiplantae</taxon>
        <taxon>Streptophyta</taxon>
        <taxon>Embryophyta</taxon>
        <taxon>Tracheophyta</taxon>
        <taxon>Spermatophyta</taxon>
        <taxon>Magnoliopsida</taxon>
        <taxon>eudicotyledons</taxon>
        <taxon>Gunneridae</taxon>
        <taxon>Pentapetalae</taxon>
        <taxon>rosids</taxon>
        <taxon>malvids</taxon>
        <taxon>Brassicales</taxon>
        <taxon>Brassicaceae</taxon>
        <taxon>Camelineae</taxon>
        <taxon>Arabidopsis</taxon>
    </lineage>
</organism>
<gene>
    <name type="primary">WAKL15</name>
    <name type="ordered locus">At3g53840</name>
    <name type="ORF">F5K20_140</name>
</gene>
<accession>Q9M342</accession>
<dbReference type="EC" id="2.7.11.-"/>
<dbReference type="EMBL" id="AL132960">
    <property type="protein sequence ID" value="CAB88346.1"/>
    <property type="molecule type" value="Genomic_DNA"/>
</dbReference>
<dbReference type="EMBL" id="CP002686">
    <property type="protein sequence ID" value="AEE79149.1"/>
    <property type="molecule type" value="Genomic_DNA"/>
</dbReference>
<dbReference type="EMBL" id="BX822802">
    <property type="status" value="NOT_ANNOTATED_CDS"/>
    <property type="molecule type" value="mRNA"/>
</dbReference>
<dbReference type="PIR" id="T45924">
    <property type="entry name" value="T45924"/>
</dbReference>
<dbReference type="RefSeq" id="NP_190952.2">
    <property type="nucleotide sequence ID" value="NM_115244.3"/>
</dbReference>
<dbReference type="SMR" id="Q9M342"/>
<dbReference type="FunCoup" id="Q9M342">
    <property type="interactions" value="18"/>
</dbReference>
<dbReference type="GlyCosmos" id="Q9M342">
    <property type="glycosylation" value="5 sites, No reported glycans"/>
</dbReference>
<dbReference type="GlyGen" id="Q9M342">
    <property type="glycosylation" value="5 sites"/>
</dbReference>
<dbReference type="PaxDb" id="3702-AT3G53840.1"/>
<dbReference type="EnsemblPlants" id="AT3G53840.1">
    <property type="protein sequence ID" value="AT3G53840.1"/>
    <property type="gene ID" value="AT3G53840"/>
</dbReference>
<dbReference type="GeneID" id="824551"/>
<dbReference type="Gramene" id="AT3G53840.1">
    <property type="protein sequence ID" value="AT3G53840.1"/>
    <property type="gene ID" value="AT3G53840"/>
</dbReference>
<dbReference type="KEGG" id="ath:AT3G53840"/>
<dbReference type="Araport" id="AT3G53840"/>
<dbReference type="TAIR" id="AT3G53840"/>
<dbReference type="eggNOG" id="KOG1187">
    <property type="taxonomic scope" value="Eukaryota"/>
</dbReference>
<dbReference type="HOGENOM" id="CLU_000288_43_5_1"/>
<dbReference type="InParanoid" id="Q9M342"/>
<dbReference type="OMA" id="PVSKWPE"/>
<dbReference type="PhylomeDB" id="Q9M342"/>
<dbReference type="PRO" id="PR:Q9M342"/>
<dbReference type="Proteomes" id="UP000006548">
    <property type="component" value="Chromosome 3"/>
</dbReference>
<dbReference type="ExpressionAtlas" id="Q9M342">
    <property type="expression patterns" value="baseline and differential"/>
</dbReference>
<dbReference type="GO" id="GO:0016020">
    <property type="term" value="C:membrane"/>
    <property type="evidence" value="ECO:0007669"/>
    <property type="project" value="UniProtKB-SubCell"/>
</dbReference>
<dbReference type="GO" id="GO:0005524">
    <property type="term" value="F:ATP binding"/>
    <property type="evidence" value="ECO:0007669"/>
    <property type="project" value="UniProtKB-KW"/>
</dbReference>
<dbReference type="GO" id="GO:0106310">
    <property type="term" value="F:protein serine kinase activity"/>
    <property type="evidence" value="ECO:0007669"/>
    <property type="project" value="RHEA"/>
</dbReference>
<dbReference type="GO" id="GO:0004674">
    <property type="term" value="F:protein serine/threonine kinase activity"/>
    <property type="evidence" value="ECO:0007669"/>
    <property type="project" value="UniProtKB-KW"/>
</dbReference>
<dbReference type="FunFam" id="3.30.200.20:FF:000162">
    <property type="entry name" value="Adenine nucleotide alpha hydrolase-like domain kinase"/>
    <property type="match status" value="1"/>
</dbReference>
<dbReference type="FunFam" id="1.10.510.10:FF:000161">
    <property type="entry name" value="Wall-associated receptor kinase-like 20"/>
    <property type="match status" value="1"/>
</dbReference>
<dbReference type="Gene3D" id="3.30.200.20">
    <property type="entry name" value="Phosphorylase Kinase, domain 1"/>
    <property type="match status" value="1"/>
</dbReference>
<dbReference type="Gene3D" id="1.10.510.10">
    <property type="entry name" value="Transferase(Phosphotransferase) domain 1"/>
    <property type="match status" value="1"/>
</dbReference>
<dbReference type="InterPro" id="IPR011009">
    <property type="entry name" value="Kinase-like_dom_sf"/>
</dbReference>
<dbReference type="InterPro" id="IPR000719">
    <property type="entry name" value="Prot_kinase_dom"/>
</dbReference>
<dbReference type="InterPro" id="IPR017441">
    <property type="entry name" value="Protein_kinase_ATP_BS"/>
</dbReference>
<dbReference type="InterPro" id="IPR001245">
    <property type="entry name" value="Ser-Thr/Tyr_kinase_cat_dom"/>
</dbReference>
<dbReference type="InterPro" id="IPR008271">
    <property type="entry name" value="Ser/Thr_kinase_AS"/>
</dbReference>
<dbReference type="PANTHER" id="PTHR46008">
    <property type="entry name" value="LEAF RUST 10 DISEASE-RESISTANCE LOCUS RECEPTOR-LIKE PROTEIN KINASE-LIKE 1.4"/>
    <property type="match status" value="1"/>
</dbReference>
<dbReference type="PANTHER" id="PTHR46008:SF25">
    <property type="entry name" value="PROTEIN KINASE DOMAIN-CONTAINING PROTEIN"/>
    <property type="match status" value="1"/>
</dbReference>
<dbReference type="Pfam" id="PF07714">
    <property type="entry name" value="PK_Tyr_Ser-Thr"/>
    <property type="match status" value="1"/>
</dbReference>
<dbReference type="SMART" id="SM00220">
    <property type="entry name" value="S_TKc"/>
    <property type="match status" value="1"/>
</dbReference>
<dbReference type="SUPFAM" id="SSF56112">
    <property type="entry name" value="Protein kinase-like (PK-like)"/>
    <property type="match status" value="1"/>
</dbReference>
<dbReference type="PROSITE" id="PS01186">
    <property type="entry name" value="EGF_2"/>
    <property type="match status" value="1"/>
</dbReference>
<dbReference type="PROSITE" id="PS00107">
    <property type="entry name" value="PROTEIN_KINASE_ATP"/>
    <property type="match status" value="1"/>
</dbReference>
<dbReference type="PROSITE" id="PS50011">
    <property type="entry name" value="PROTEIN_KINASE_DOM"/>
    <property type="match status" value="1"/>
</dbReference>
<dbReference type="PROSITE" id="PS00108">
    <property type="entry name" value="PROTEIN_KINASE_ST"/>
    <property type="match status" value="1"/>
</dbReference>
<reference key="1">
    <citation type="journal article" date="2000" name="Nature">
        <title>Sequence and analysis of chromosome 3 of the plant Arabidopsis thaliana.</title>
        <authorList>
            <person name="Salanoubat M."/>
            <person name="Lemcke K."/>
            <person name="Rieger M."/>
            <person name="Ansorge W."/>
            <person name="Unseld M."/>
            <person name="Fartmann B."/>
            <person name="Valle G."/>
            <person name="Bloecker H."/>
            <person name="Perez-Alonso M."/>
            <person name="Obermaier B."/>
            <person name="Delseny M."/>
            <person name="Boutry M."/>
            <person name="Grivell L.A."/>
            <person name="Mache R."/>
            <person name="Puigdomenech P."/>
            <person name="De Simone V."/>
            <person name="Choisne N."/>
            <person name="Artiguenave F."/>
            <person name="Robert C."/>
            <person name="Brottier P."/>
            <person name="Wincker P."/>
            <person name="Cattolico L."/>
            <person name="Weissenbach J."/>
            <person name="Saurin W."/>
            <person name="Quetier F."/>
            <person name="Schaefer M."/>
            <person name="Mueller-Auer S."/>
            <person name="Gabel C."/>
            <person name="Fuchs M."/>
            <person name="Benes V."/>
            <person name="Wurmbach E."/>
            <person name="Drzonek H."/>
            <person name="Erfle H."/>
            <person name="Jordan N."/>
            <person name="Bangert S."/>
            <person name="Wiedelmann R."/>
            <person name="Kranz H."/>
            <person name="Voss H."/>
            <person name="Holland R."/>
            <person name="Brandt P."/>
            <person name="Nyakatura G."/>
            <person name="Vezzi A."/>
            <person name="D'Angelo M."/>
            <person name="Pallavicini A."/>
            <person name="Toppo S."/>
            <person name="Simionati B."/>
            <person name="Conrad A."/>
            <person name="Hornischer K."/>
            <person name="Kauer G."/>
            <person name="Loehnert T.-H."/>
            <person name="Nordsiek G."/>
            <person name="Reichelt J."/>
            <person name="Scharfe M."/>
            <person name="Schoen O."/>
            <person name="Bargues M."/>
            <person name="Terol J."/>
            <person name="Climent J."/>
            <person name="Navarro P."/>
            <person name="Collado C."/>
            <person name="Perez-Perez A."/>
            <person name="Ottenwaelder B."/>
            <person name="Duchemin D."/>
            <person name="Cooke R."/>
            <person name="Laudie M."/>
            <person name="Berger-Llauro C."/>
            <person name="Purnelle B."/>
            <person name="Masuy D."/>
            <person name="de Haan M."/>
            <person name="Maarse A.C."/>
            <person name="Alcaraz J.-P."/>
            <person name="Cottet A."/>
            <person name="Casacuberta E."/>
            <person name="Monfort A."/>
            <person name="Argiriou A."/>
            <person name="Flores M."/>
            <person name="Liguori R."/>
            <person name="Vitale D."/>
            <person name="Mannhaupt G."/>
            <person name="Haase D."/>
            <person name="Schoof H."/>
            <person name="Rudd S."/>
            <person name="Zaccaria P."/>
            <person name="Mewes H.-W."/>
            <person name="Mayer K.F.X."/>
            <person name="Kaul S."/>
            <person name="Town C.D."/>
            <person name="Koo H.L."/>
            <person name="Tallon L.J."/>
            <person name="Jenkins J."/>
            <person name="Rooney T."/>
            <person name="Rizzo M."/>
            <person name="Walts A."/>
            <person name="Utterback T."/>
            <person name="Fujii C.Y."/>
            <person name="Shea T.P."/>
            <person name="Creasy T.H."/>
            <person name="Haas B."/>
            <person name="Maiti R."/>
            <person name="Wu D."/>
            <person name="Peterson J."/>
            <person name="Van Aken S."/>
            <person name="Pai G."/>
            <person name="Militscher J."/>
            <person name="Sellers P."/>
            <person name="Gill J.E."/>
            <person name="Feldblyum T.V."/>
            <person name="Preuss D."/>
            <person name="Lin X."/>
            <person name="Nierman W.C."/>
            <person name="Salzberg S.L."/>
            <person name="White O."/>
            <person name="Venter J.C."/>
            <person name="Fraser C.M."/>
            <person name="Kaneko T."/>
            <person name="Nakamura Y."/>
            <person name="Sato S."/>
            <person name="Kato T."/>
            <person name="Asamizu E."/>
            <person name="Sasamoto S."/>
            <person name="Kimura T."/>
            <person name="Idesawa K."/>
            <person name="Kawashima K."/>
            <person name="Kishida Y."/>
            <person name="Kiyokawa C."/>
            <person name="Kohara M."/>
            <person name="Matsumoto M."/>
            <person name="Matsuno A."/>
            <person name="Muraki A."/>
            <person name="Nakayama S."/>
            <person name="Nakazaki N."/>
            <person name="Shinpo S."/>
            <person name="Takeuchi C."/>
            <person name="Wada T."/>
            <person name="Watanabe A."/>
            <person name="Yamada M."/>
            <person name="Yasuda M."/>
            <person name="Tabata S."/>
        </authorList>
    </citation>
    <scope>NUCLEOTIDE SEQUENCE [LARGE SCALE GENOMIC DNA]</scope>
    <source>
        <strain>cv. Columbia</strain>
    </source>
</reference>
<reference key="2">
    <citation type="journal article" date="2017" name="Plant J.">
        <title>Araport11: a complete reannotation of the Arabidopsis thaliana reference genome.</title>
        <authorList>
            <person name="Cheng C.Y."/>
            <person name="Krishnakumar V."/>
            <person name="Chan A.P."/>
            <person name="Thibaud-Nissen F."/>
            <person name="Schobel S."/>
            <person name="Town C.D."/>
        </authorList>
    </citation>
    <scope>GENOME REANNOTATION</scope>
    <source>
        <strain>cv. Columbia</strain>
    </source>
</reference>
<reference key="3">
    <citation type="journal article" date="2004" name="Genome Res.">
        <title>Whole genome sequence comparisons and 'full-length' cDNA sequences: a combined approach to evaluate and improve Arabidopsis genome annotation.</title>
        <authorList>
            <person name="Castelli V."/>
            <person name="Aury J.-M."/>
            <person name="Jaillon O."/>
            <person name="Wincker P."/>
            <person name="Clepet C."/>
            <person name="Menard M."/>
            <person name="Cruaud C."/>
            <person name="Quetier F."/>
            <person name="Scarpelli C."/>
            <person name="Schaechter V."/>
            <person name="Temple G."/>
            <person name="Caboche M."/>
            <person name="Weissenbach J."/>
            <person name="Salanoubat M."/>
        </authorList>
    </citation>
    <scope>NUCLEOTIDE SEQUENCE [LARGE SCALE MRNA] OF 32-541</scope>
    <source>
        <strain>cv. Columbia</strain>
    </source>
</reference>
<reference key="4">
    <citation type="journal article" date="2002" name="Plant Physiol.">
        <title>The cell wall-associated kinase (WAK) and WAK-like kinase gene family.</title>
        <authorList>
            <person name="Verica J.A."/>
            <person name="He Z.-H."/>
        </authorList>
    </citation>
    <scope>GENE FAMILY ORGANIZATION</scope>
</reference>
<evidence type="ECO:0000255" key="1"/>
<evidence type="ECO:0000255" key="2">
    <source>
        <dbReference type="PROSITE-ProRule" id="PRU00159"/>
    </source>
</evidence>
<evidence type="ECO:0000255" key="3">
    <source>
        <dbReference type="PROSITE-ProRule" id="PRU10027"/>
    </source>
</evidence>
<evidence type="ECO:0000305" key="4"/>
<sequence length="639" mass="70690">MELPWLSLTTFTLSLLIYFSSTTQAFKRCPNCGSTRVPYPLSTGLDCGDPGYRIRCDNYGSLWFDTLNGSTNPIKTIDPSGQRFVLRPPGFEQNKCVSVDIKYHGIQLDLNLPFNVSCSNTVIIMNCTKDGLDAYSSQGFNCSDNSLCHKFLNANLEARGNCRGVTSCCWYKTGASVNTYKVYRARPDMCSAYQSFMNLDLTIPVSKWGEPAVEILWEAPREPVCKSQGDCRDLLNSVCSNDSTNLGQKRCFCKKGFQWDSVNAVCEVNRCSKRKSCKRWSNLPLLGGLAGGVGAILIAGFITKTIVSKQNRRIAGNQSWASVRKLHRNLLSINSTGLDRIFTGKEIVKATDNFAKSNLLGFGGFGEVFKGNLDDGTTVAVKRAKLGNEKSIYQIVNEVQILCQVSHKNLVKLLGCCIELEMPVLVYEFVPNGTLFEHIYGGGGGGGGLYDHLPLRRRLMIAHQTAQGLDYLHSSSSPPIYHRDVKSSNILLDENLDVKVADFGLSRLGVSDVSHVTTCAQGTLGYLDPEYYLNFQLTDKSDVYSFGVVLFELLTCKKAIDFNREEEDVNLVVFVRKALKEGRLMDVIDPVIGIGATEKEIESMKALGVLAELCVKETRQCRPTMQVAAKEIENILHGI</sequence>
<protein>
    <recommendedName>
        <fullName>Wall-associated receptor kinase-like 15</fullName>
        <ecNumber>2.7.11.-</ecNumber>
    </recommendedName>
</protein>
<name>WAKLP_ARATH</name>